<name>ATPF2_AGRFC</name>
<gene>
    <name type="primary">atpF2</name>
    <name type="synonym">atpG</name>
    <name type="ordered locus">Atu0716</name>
    <name type="ORF">AGR_C_1299</name>
</gene>
<organism>
    <name type="scientific">Agrobacterium fabrum (strain C58 / ATCC 33970)</name>
    <name type="common">Agrobacterium tumefaciens (strain C58)</name>
    <dbReference type="NCBI Taxonomy" id="176299"/>
    <lineage>
        <taxon>Bacteria</taxon>
        <taxon>Pseudomonadati</taxon>
        <taxon>Pseudomonadota</taxon>
        <taxon>Alphaproteobacteria</taxon>
        <taxon>Hyphomicrobiales</taxon>
        <taxon>Rhizobiaceae</taxon>
        <taxon>Rhizobium/Agrobacterium group</taxon>
        <taxon>Agrobacterium</taxon>
        <taxon>Agrobacterium tumefaciens complex</taxon>
    </lineage>
</organism>
<keyword id="KW-0066">ATP synthesis</keyword>
<keyword id="KW-0997">Cell inner membrane</keyword>
<keyword id="KW-1003">Cell membrane</keyword>
<keyword id="KW-0138">CF(0)</keyword>
<keyword id="KW-0375">Hydrogen ion transport</keyword>
<keyword id="KW-0406">Ion transport</keyword>
<keyword id="KW-0472">Membrane</keyword>
<keyword id="KW-1185">Reference proteome</keyword>
<keyword id="KW-0812">Transmembrane</keyword>
<keyword id="KW-1133">Transmembrane helix</keyword>
<keyword id="KW-0813">Transport</keyword>
<reference key="1">
    <citation type="journal article" date="2001" name="Science">
        <title>The genome of the natural genetic engineer Agrobacterium tumefaciens C58.</title>
        <authorList>
            <person name="Wood D.W."/>
            <person name="Setubal J.C."/>
            <person name="Kaul R."/>
            <person name="Monks D.E."/>
            <person name="Kitajima J.P."/>
            <person name="Okura V.K."/>
            <person name="Zhou Y."/>
            <person name="Chen L."/>
            <person name="Wood G.E."/>
            <person name="Almeida N.F. Jr."/>
            <person name="Woo L."/>
            <person name="Chen Y."/>
            <person name="Paulsen I.T."/>
            <person name="Eisen J.A."/>
            <person name="Karp P.D."/>
            <person name="Bovee D. Sr."/>
            <person name="Chapman P."/>
            <person name="Clendenning J."/>
            <person name="Deatherage G."/>
            <person name="Gillet W."/>
            <person name="Grant C."/>
            <person name="Kutyavin T."/>
            <person name="Levy R."/>
            <person name="Li M.-J."/>
            <person name="McClelland E."/>
            <person name="Palmieri A."/>
            <person name="Raymond C."/>
            <person name="Rouse G."/>
            <person name="Saenphimmachak C."/>
            <person name="Wu Z."/>
            <person name="Romero P."/>
            <person name="Gordon D."/>
            <person name="Zhang S."/>
            <person name="Yoo H."/>
            <person name="Tao Y."/>
            <person name="Biddle P."/>
            <person name="Jung M."/>
            <person name="Krespan W."/>
            <person name="Perry M."/>
            <person name="Gordon-Kamm B."/>
            <person name="Liao L."/>
            <person name="Kim S."/>
            <person name="Hendrick C."/>
            <person name="Zhao Z.-Y."/>
            <person name="Dolan M."/>
            <person name="Chumley F."/>
            <person name="Tingey S.V."/>
            <person name="Tomb J.-F."/>
            <person name="Gordon M.P."/>
            <person name="Olson M.V."/>
            <person name="Nester E.W."/>
        </authorList>
    </citation>
    <scope>NUCLEOTIDE SEQUENCE [LARGE SCALE GENOMIC DNA]</scope>
    <source>
        <strain>C58 / ATCC 33970</strain>
    </source>
</reference>
<reference key="2">
    <citation type="journal article" date="2001" name="Science">
        <title>Genome sequence of the plant pathogen and biotechnology agent Agrobacterium tumefaciens C58.</title>
        <authorList>
            <person name="Goodner B."/>
            <person name="Hinkle G."/>
            <person name="Gattung S."/>
            <person name="Miller N."/>
            <person name="Blanchard M."/>
            <person name="Qurollo B."/>
            <person name="Goldman B.S."/>
            <person name="Cao Y."/>
            <person name="Askenazi M."/>
            <person name="Halling C."/>
            <person name="Mullin L."/>
            <person name="Houmiel K."/>
            <person name="Gordon J."/>
            <person name="Vaudin M."/>
            <person name="Iartchouk O."/>
            <person name="Epp A."/>
            <person name="Liu F."/>
            <person name="Wollam C."/>
            <person name="Allinger M."/>
            <person name="Doughty D."/>
            <person name="Scott C."/>
            <person name="Lappas C."/>
            <person name="Markelz B."/>
            <person name="Flanagan C."/>
            <person name="Crowell C."/>
            <person name="Gurson J."/>
            <person name="Lomo C."/>
            <person name="Sear C."/>
            <person name="Strub G."/>
            <person name="Cielo C."/>
            <person name="Slater S."/>
        </authorList>
    </citation>
    <scope>NUCLEOTIDE SEQUENCE [LARGE SCALE GENOMIC DNA]</scope>
    <source>
        <strain>C58 / ATCC 33970</strain>
    </source>
</reference>
<comment type="function">
    <text evidence="1">F(1)F(0) ATP synthase produces ATP from ADP in the presence of a proton or sodium gradient. F-type ATPases consist of two structural domains, F(1) containing the extramembraneous catalytic core and F(0) containing the membrane proton channel, linked together by a central stalk and a peripheral stalk. During catalysis, ATP synthesis in the catalytic domain of F(1) is coupled via a rotary mechanism of the central stalk subunits to proton translocation (By similarity).</text>
</comment>
<comment type="function">
    <text evidence="1">Component of the F(0) channel, it forms part of the peripheral stalk, linking F(1) to F(0). The b'-subunit is a diverged and duplicated form of b found in plants and photosynthetic bacteria (By similarity).</text>
</comment>
<comment type="subunit">
    <text evidence="1">F-type ATPases have 2 components, F(1) - the catalytic core - and F(0) - the membrane proton channel. F(1) has five subunits: alpha(3), beta(3), gamma(1), delta(1), epsilon(1). F(0) has three main subunits: a(1), b(2) and c(10-14). The alpha and beta chains form an alternating ring which encloses part of the gamma chain. F(1) is attached to F(0) by a central stalk formed by the gamma and epsilon chains, while a peripheral stalk is formed by the delta and b chains (By similarity).</text>
</comment>
<comment type="subcellular location">
    <subcellularLocation>
        <location evidence="1">Cell inner membrane</location>
        <topology evidence="1">Single-pass membrane protein</topology>
    </subcellularLocation>
</comment>
<comment type="similarity">
    <text evidence="4">Belongs to the ATPase B chain family.</text>
</comment>
<evidence type="ECO:0000250" key="1"/>
<evidence type="ECO:0000255" key="2"/>
<evidence type="ECO:0000256" key="3">
    <source>
        <dbReference type="SAM" id="MobiDB-lite"/>
    </source>
</evidence>
<evidence type="ECO:0000305" key="4"/>
<protein>
    <recommendedName>
        <fullName>ATP synthase subunit b 2</fullName>
    </recommendedName>
    <alternativeName>
        <fullName>ATP synthase F(0) sector subunit b 2</fullName>
    </alternativeName>
    <alternativeName>
        <fullName>ATPase subunit I 2</fullName>
    </alternativeName>
    <alternativeName>
        <fullName>F-type ATPase subunit b 2</fullName>
        <shortName>F-ATPase subunit b 2</shortName>
    </alternativeName>
</protein>
<proteinExistence type="inferred from homology"/>
<sequence>MFVTEAYAQSAPTVGETHTETPAVGQPQPEATHTETGVAHGAEHGASGVFPPFDQSTYASQVLWLAITFGLFYLLMQKVIVPRVGGILENRHGRIAQDLDEAARLKAEADTAVETYEKELAAARAKASSIGASARDAAKAKADADRAAIEAGLAEKLAAAEKRIAGIRDHAFADVGAIAEETATAIVDQLVGAKVKDTDVKAAIAAASAVKGA</sequence>
<feature type="chain" id="PRO_0000368997" description="ATP synthase subunit b 2">
    <location>
        <begin position="1"/>
        <end position="213"/>
    </location>
</feature>
<feature type="transmembrane region" description="Helical" evidence="2">
    <location>
        <begin position="57"/>
        <end position="76"/>
    </location>
</feature>
<feature type="region of interest" description="Disordered" evidence="3">
    <location>
        <begin position="1"/>
        <end position="45"/>
    </location>
</feature>
<accession>Q7D0U9</accession>
<dbReference type="EMBL" id="AE007869">
    <property type="protein sequence ID" value="AAK86526.2"/>
    <property type="molecule type" value="Genomic_DNA"/>
</dbReference>
<dbReference type="RefSeq" id="NP_353741.2">
    <property type="nucleotide sequence ID" value="NC_003062.2"/>
</dbReference>
<dbReference type="RefSeq" id="WP_010971091.1">
    <property type="nucleotide sequence ID" value="NC_003062.2"/>
</dbReference>
<dbReference type="SMR" id="Q7D0U9"/>
<dbReference type="STRING" id="176299.Atu0716"/>
<dbReference type="EnsemblBacteria" id="AAK86526">
    <property type="protein sequence ID" value="AAK86526"/>
    <property type="gene ID" value="Atu0716"/>
</dbReference>
<dbReference type="GeneID" id="1132754"/>
<dbReference type="KEGG" id="atu:Atu0716"/>
<dbReference type="PATRIC" id="fig|176299.10.peg.714"/>
<dbReference type="eggNOG" id="COG0711">
    <property type="taxonomic scope" value="Bacteria"/>
</dbReference>
<dbReference type="HOGENOM" id="CLU_079215_1_2_5"/>
<dbReference type="OrthoDB" id="9805716at2"/>
<dbReference type="BioCyc" id="AGRO:ATU0716-MONOMER"/>
<dbReference type="Proteomes" id="UP000000813">
    <property type="component" value="Chromosome circular"/>
</dbReference>
<dbReference type="GO" id="GO:0005886">
    <property type="term" value="C:plasma membrane"/>
    <property type="evidence" value="ECO:0007669"/>
    <property type="project" value="UniProtKB-SubCell"/>
</dbReference>
<dbReference type="GO" id="GO:0045259">
    <property type="term" value="C:proton-transporting ATP synthase complex"/>
    <property type="evidence" value="ECO:0007669"/>
    <property type="project" value="UniProtKB-KW"/>
</dbReference>
<dbReference type="GO" id="GO:0046933">
    <property type="term" value="F:proton-transporting ATP synthase activity, rotational mechanism"/>
    <property type="evidence" value="ECO:0007669"/>
    <property type="project" value="UniProtKB-UniRule"/>
</dbReference>
<dbReference type="GO" id="GO:0046961">
    <property type="term" value="F:proton-transporting ATPase activity, rotational mechanism"/>
    <property type="evidence" value="ECO:0007669"/>
    <property type="project" value="TreeGrafter"/>
</dbReference>
<dbReference type="CDD" id="cd06503">
    <property type="entry name" value="ATP-synt_Fo_b"/>
    <property type="match status" value="1"/>
</dbReference>
<dbReference type="HAMAP" id="MF_01398">
    <property type="entry name" value="ATP_synth_b_bprime"/>
    <property type="match status" value="1"/>
</dbReference>
<dbReference type="InterPro" id="IPR002146">
    <property type="entry name" value="ATP_synth_b/b'su_bac/chlpt"/>
</dbReference>
<dbReference type="InterPro" id="IPR050059">
    <property type="entry name" value="ATP_synthase_B_chain"/>
</dbReference>
<dbReference type="NCBIfam" id="NF006612">
    <property type="entry name" value="PRK09174.1"/>
    <property type="match status" value="1"/>
</dbReference>
<dbReference type="PANTHER" id="PTHR33445:SF1">
    <property type="entry name" value="ATP SYNTHASE SUBUNIT B"/>
    <property type="match status" value="1"/>
</dbReference>
<dbReference type="PANTHER" id="PTHR33445">
    <property type="entry name" value="ATP SYNTHASE SUBUNIT B', CHLOROPLASTIC"/>
    <property type="match status" value="1"/>
</dbReference>
<dbReference type="Pfam" id="PF00430">
    <property type="entry name" value="ATP-synt_B"/>
    <property type="match status" value="1"/>
</dbReference>